<proteinExistence type="evidence at protein level"/>
<dbReference type="EMBL" id="AB232931">
    <property type="protein sequence ID" value="BAE80119.1"/>
    <property type="molecule type" value="Genomic_DNA"/>
</dbReference>
<dbReference type="EMBL" id="CU329670">
    <property type="protein sequence ID" value="CAB65606.1"/>
    <property type="molecule type" value="Genomic_DNA"/>
</dbReference>
<dbReference type="RefSeq" id="NP_593493.1">
    <property type="nucleotide sequence ID" value="NM_001018927.1"/>
</dbReference>
<dbReference type="BioGRID" id="279701">
    <property type="interactions" value="5"/>
</dbReference>
<dbReference type="FunCoup" id="Q9US52">
    <property type="interactions" value="2"/>
</dbReference>
<dbReference type="IntAct" id="Q9US52">
    <property type="interactions" value="3"/>
</dbReference>
<dbReference type="STRING" id="284812.Q9US52"/>
<dbReference type="PaxDb" id="4896-SPAC1002.06c.1"/>
<dbReference type="EnsemblFungi" id="SPAC1002.06c.1">
    <property type="protein sequence ID" value="SPAC1002.06c.1:pep"/>
    <property type="gene ID" value="SPAC1002.06c"/>
</dbReference>
<dbReference type="GeneID" id="2543273"/>
<dbReference type="KEGG" id="spo:2543273"/>
<dbReference type="PomBase" id="SPAC1002.06c">
    <property type="gene designation" value="bqt2"/>
</dbReference>
<dbReference type="VEuPathDB" id="FungiDB:SPAC1002.06c"/>
<dbReference type="HOGENOM" id="CLU_2159869_0_0_1"/>
<dbReference type="InParanoid" id="Q9US52"/>
<dbReference type="OMA" id="WWIAEQV"/>
<dbReference type="CD-CODE" id="576F0A76">
    <property type="entry name" value="Centrosome"/>
</dbReference>
<dbReference type="PRO" id="PR:Q9US52"/>
<dbReference type="Proteomes" id="UP000002485">
    <property type="component" value="Chromosome I"/>
</dbReference>
<dbReference type="GO" id="GO:0140445">
    <property type="term" value="C:chromosome, telomeric repeat region"/>
    <property type="evidence" value="ECO:0000314"/>
    <property type="project" value="PomBase"/>
</dbReference>
<dbReference type="GO" id="GO:0005737">
    <property type="term" value="C:cytoplasm"/>
    <property type="evidence" value="ECO:0007669"/>
    <property type="project" value="UniProtKB-SubCell"/>
</dbReference>
<dbReference type="GO" id="GO:0035974">
    <property type="term" value="C:meiotic spindle pole body"/>
    <property type="evidence" value="ECO:0000314"/>
    <property type="project" value="PomBase"/>
</dbReference>
<dbReference type="GO" id="GO:0044732">
    <property type="term" value="C:mitotic spindle pole body"/>
    <property type="evidence" value="ECO:0000314"/>
    <property type="project" value="PomBase"/>
</dbReference>
<dbReference type="GO" id="GO:0110092">
    <property type="term" value="C:nucleus leading edge"/>
    <property type="evidence" value="ECO:0000314"/>
    <property type="project" value="PomBase"/>
</dbReference>
<dbReference type="GO" id="GO:0030674">
    <property type="term" value="F:protein-macromolecule adaptor activity"/>
    <property type="evidence" value="ECO:0000353"/>
    <property type="project" value="PomBase"/>
</dbReference>
<dbReference type="GO" id="GO:0051301">
    <property type="term" value="P:cell division"/>
    <property type="evidence" value="ECO:0007669"/>
    <property type="project" value="UniProtKB-KW"/>
</dbReference>
<dbReference type="GO" id="GO:0032121">
    <property type="term" value="P:meiotic attachment of telomeric heterochromatin to spindle pole body"/>
    <property type="evidence" value="ECO:0000315"/>
    <property type="project" value="PomBase"/>
</dbReference>
<dbReference type="GO" id="GO:0045141">
    <property type="term" value="P:meiotic telomere clustering"/>
    <property type="evidence" value="ECO:0000315"/>
    <property type="project" value="PomBase"/>
</dbReference>
<evidence type="ECO:0000269" key="1">
    <source>
    </source>
</evidence>
<evidence type="ECO:0000269" key="2">
    <source>
    </source>
</evidence>
<sequence>MFQGKCAFFDETVPSALIALWQLHNGEAKFLAEGYENFDYAFSMHLRKHVRLPNYKSVQCRSPWWIAEQVAVSRSKSYVSEPVIHLNVMEPLYVDHRIRSVYLQPLPSTLSFLNGELP</sequence>
<protein>
    <recommendedName>
        <fullName>Telomere bouquet protein 2</fullName>
    </recommendedName>
    <alternativeName>
        <fullName>Meiotic chromosome segregation protein bqt2</fullName>
    </alternativeName>
    <alternativeName>
        <fullName>Meiotically up-regulated gene 18 protein</fullName>
    </alternativeName>
</protein>
<gene>
    <name type="primary">bqt2</name>
    <name type="synonym">mug18</name>
    <name type="ORF">SPAC1002.06c</name>
</gene>
<organism>
    <name type="scientific">Schizosaccharomyces pombe (strain 972 / ATCC 24843)</name>
    <name type="common">Fission yeast</name>
    <dbReference type="NCBI Taxonomy" id="284812"/>
    <lineage>
        <taxon>Eukaryota</taxon>
        <taxon>Fungi</taxon>
        <taxon>Dikarya</taxon>
        <taxon>Ascomycota</taxon>
        <taxon>Taphrinomycotina</taxon>
        <taxon>Schizosaccharomycetes</taxon>
        <taxon>Schizosaccharomycetales</taxon>
        <taxon>Schizosaccharomycetaceae</taxon>
        <taxon>Schizosaccharomyces</taxon>
    </lineage>
</organism>
<name>BQT2_SCHPO</name>
<feature type="chain" id="PRO_0000116801" description="Telomere bouquet protein 2">
    <location>
        <begin position="1"/>
        <end position="118"/>
    </location>
</feature>
<keyword id="KW-0131">Cell cycle</keyword>
<keyword id="KW-0132">Cell division</keyword>
<keyword id="KW-0158">Chromosome</keyword>
<keyword id="KW-0159">Chromosome partition</keyword>
<keyword id="KW-0963">Cytoplasm</keyword>
<keyword id="KW-0206">Cytoskeleton</keyword>
<keyword id="KW-0469">Meiosis</keyword>
<keyword id="KW-0539">Nucleus</keyword>
<keyword id="KW-1185">Reference proteome</keyword>
<keyword id="KW-0779">Telomere</keyword>
<reference key="1">
    <citation type="journal article" date="2006" name="Cell">
        <title>Meiotic proteins bqt1 and bqt2 tether telomeres to form the bouquet arrangement of chromosomes.</title>
        <authorList>
            <person name="Chikashige Y."/>
            <person name="Tsutsumi C."/>
            <person name="Yamane M."/>
            <person name="Okamasa K."/>
            <person name="Haraguchi T."/>
            <person name="Hiraoka Y."/>
        </authorList>
    </citation>
    <scope>NUCLEOTIDE SEQUENCE [GENOMIC DNA]</scope>
    <scope>FUNCTION</scope>
    <scope>INTERACTION WITH BQT1</scope>
    <scope>SUBCELLULAR LOCATION</scope>
</reference>
<reference key="2">
    <citation type="journal article" date="2002" name="Nature">
        <title>The genome sequence of Schizosaccharomyces pombe.</title>
        <authorList>
            <person name="Wood V."/>
            <person name="Gwilliam R."/>
            <person name="Rajandream M.A."/>
            <person name="Lyne M.H."/>
            <person name="Lyne R."/>
            <person name="Stewart A."/>
            <person name="Sgouros J.G."/>
            <person name="Peat N."/>
            <person name="Hayles J."/>
            <person name="Baker S.G."/>
            <person name="Basham D."/>
            <person name="Bowman S."/>
            <person name="Brooks K."/>
            <person name="Brown D."/>
            <person name="Brown S."/>
            <person name="Chillingworth T."/>
            <person name="Churcher C.M."/>
            <person name="Collins M."/>
            <person name="Connor R."/>
            <person name="Cronin A."/>
            <person name="Davis P."/>
            <person name="Feltwell T."/>
            <person name="Fraser A."/>
            <person name="Gentles S."/>
            <person name="Goble A."/>
            <person name="Hamlin N."/>
            <person name="Harris D.E."/>
            <person name="Hidalgo J."/>
            <person name="Hodgson G."/>
            <person name="Holroyd S."/>
            <person name="Hornsby T."/>
            <person name="Howarth S."/>
            <person name="Huckle E.J."/>
            <person name="Hunt S."/>
            <person name="Jagels K."/>
            <person name="James K.D."/>
            <person name="Jones L."/>
            <person name="Jones M."/>
            <person name="Leather S."/>
            <person name="McDonald S."/>
            <person name="McLean J."/>
            <person name="Mooney P."/>
            <person name="Moule S."/>
            <person name="Mungall K.L."/>
            <person name="Murphy L.D."/>
            <person name="Niblett D."/>
            <person name="Odell C."/>
            <person name="Oliver K."/>
            <person name="O'Neil S."/>
            <person name="Pearson D."/>
            <person name="Quail M.A."/>
            <person name="Rabbinowitsch E."/>
            <person name="Rutherford K.M."/>
            <person name="Rutter S."/>
            <person name="Saunders D."/>
            <person name="Seeger K."/>
            <person name="Sharp S."/>
            <person name="Skelton J."/>
            <person name="Simmonds M.N."/>
            <person name="Squares R."/>
            <person name="Squares S."/>
            <person name="Stevens K."/>
            <person name="Taylor K."/>
            <person name="Taylor R.G."/>
            <person name="Tivey A."/>
            <person name="Walsh S.V."/>
            <person name="Warren T."/>
            <person name="Whitehead S."/>
            <person name="Woodward J.R."/>
            <person name="Volckaert G."/>
            <person name="Aert R."/>
            <person name="Robben J."/>
            <person name="Grymonprez B."/>
            <person name="Weltjens I."/>
            <person name="Vanstreels E."/>
            <person name="Rieger M."/>
            <person name="Schaefer M."/>
            <person name="Mueller-Auer S."/>
            <person name="Gabel C."/>
            <person name="Fuchs M."/>
            <person name="Duesterhoeft A."/>
            <person name="Fritzc C."/>
            <person name="Holzer E."/>
            <person name="Moestl D."/>
            <person name="Hilbert H."/>
            <person name="Borzym K."/>
            <person name="Langer I."/>
            <person name="Beck A."/>
            <person name="Lehrach H."/>
            <person name="Reinhardt R."/>
            <person name="Pohl T.M."/>
            <person name="Eger P."/>
            <person name="Zimmermann W."/>
            <person name="Wedler H."/>
            <person name="Wambutt R."/>
            <person name="Purnelle B."/>
            <person name="Goffeau A."/>
            <person name="Cadieu E."/>
            <person name="Dreano S."/>
            <person name="Gloux S."/>
            <person name="Lelaure V."/>
            <person name="Mottier S."/>
            <person name="Galibert F."/>
            <person name="Aves S.J."/>
            <person name="Xiang Z."/>
            <person name="Hunt C."/>
            <person name="Moore K."/>
            <person name="Hurst S.M."/>
            <person name="Lucas M."/>
            <person name="Rochet M."/>
            <person name="Gaillardin C."/>
            <person name="Tallada V.A."/>
            <person name="Garzon A."/>
            <person name="Thode G."/>
            <person name="Daga R.R."/>
            <person name="Cruzado L."/>
            <person name="Jimenez J."/>
            <person name="Sanchez M."/>
            <person name="del Rey F."/>
            <person name="Benito J."/>
            <person name="Dominguez A."/>
            <person name="Revuelta J.L."/>
            <person name="Moreno S."/>
            <person name="Armstrong J."/>
            <person name="Forsburg S.L."/>
            <person name="Cerutti L."/>
            <person name="Lowe T."/>
            <person name="McCombie W.R."/>
            <person name="Paulsen I."/>
            <person name="Potashkin J."/>
            <person name="Shpakovski G.V."/>
            <person name="Ussery D."/>
            <person name="Barrell B.G."/>
            <person name="Nurse P."/>
        </authorList>
    </citation>
    <scope>NUCLEOTIDE SEQUENCE [LARGE SCALE GENOMIC DNA]</scope>
    <source>
        <strain>972 / ATCC 24843</strain>
    </source>
</reference>
<reference key="3">
    <citation type="journal article" date="2005" name="Curr. Biol.">
        <title>A large-scale screen in S. pombe identifies seven novel genes required for critical meiotic events.</title>
        <authorList>
            <person name="Martin-Castellanos C."/>
            <person name="Blanco M."/>
            <person name="Rozalen A.E."/>
            <person name="Perez-Hidalgo L."/>
            <person name="Garcia A.I."/>
            <person name="Conde F."/>
            <person name="Mata J."/>
            <person name="Ellermeier C."/>
            <person name="Davis L."/>
            <person name="San-Segundo P."/>
            <person name="Smith G.R."/>
            <person name="Moreno S."/>
        </authorList>
    </citation>
    <scope>FUNCTION IN MEIOSIS</scope>
</reference>
<reference key="4">
    <citation type="journal article" date="2006" name="Nat. Biotechnol.">
        <title>ORFeome cloning and global analysis of protein localization in the fission yeast Schizosaccharomyces pombe.</title>
        <authorList>
            <person name="Matsuyama A."/>
            <person name="Arai R."/>
            <person name="Yashiroda Y."/>
            <person name="Shirai A."/>
            <person name="Kamata A."/>
            <person name="Sekido S."/>
            <person name="Kobayashi Y."/>
            <person name="Hashimoto A."/>
            <person name="Hamamoto M."/>
            <person name="Hiraoka Y."/>
            <person name="Horinouchi S."/>
            <person name="Yoshida M."/>
        </authorList>
    </citation>
    <scope>SUBCELLULAR LOCATION [LARGE SCALE ANALYSIS]</scope>
</reference>
<accession>Q9US52</accession>
<accession>Q2ABX3</accession>
<comment type="function">
    <text evidence="1 2">Involved in chromosome segregation. During meiotic prophase, connects telomeres to the spindle pole body by forming a bridge between the telomere protein rap1 and the spindle pole body protein sad1.</text>
</comment>
<comment type="subunit">
    <text evidence="2">Interacts with bqt1. The bqt1-bqt2-sad1 complex binds rap1.</text>
</comment>
<comment type="interaction">
    <interactant intactId="EBI-929651">
        <id>Q9US52</id>
    </interactant>
    <interactant intactId="EBI-929655">
        <id>Q92358</id>
        <label>bqt1</label>
    </interactant>
    <organismsDiffer>false</organismsDiffer>
    <experiments>6</experiments>
</comment>
<comment type="subcellular location">
    <subcellularLocation>
        <location>Cytoplasm</location>
    </subcellularLocation>
    <subcellularLocation>
        <location>Nucleus</location>
    </subcellularLocation>
    <subcellularLocation>
        <location>Cytoplasm</location>
        <location>Cytoskeleton</location>
        <location>Microtubule organizing center</location>
        <location>Spindle pole body</location>
    </subcellularLocation>
    <subcellularLocation>
        <location>Chromosome</location>
        <location>Telomere</location>
    </subcellularLocation>
    <text>Colocalizes with the telomere cluster during the 'horsetail' stage and then disappears before the first meiotic division.</text>
</comment>